<accession>Q9USU9</accession>
<sequence>MSNSIVGEVYHHVILDVIANSRSDFEENGVDDATLRELQNLWQSKLVATDVATFPWAQAPVGTFPIGQLFDPVSGLRTDSLDVTAPAVANSPILNNIAAIRAVQQMDTFAQQHGNSNYYSPPTPSLPQSATNISFDSSAIPNVQSNPNNTAPFPSYSSNSLQLPTNQTADSPIINDHSTANVTSTGQEHAPDSSSTNSFGGLLLPNQNSPKKSELGETESSNTTPANSRNDVPQTDGAIHDLDDAGSPSNFESNRFAIAQKADAEIYEVLKKNRILQIDGTIEDNEDEKKPPVDTPSDEAINSDLDDPDSDEAPETEEGSDIGQAIVLCLYDKVNHHKNKWKCVFRDGVVGVNGKDYLFFKANGEFEWI</sequence>
<protein>
    <recommendedName>
        <fullName evidence="2 6">Transcription initiation factor IIA large subunit</fullName>
        <shortName evidence="2">TFIIA large subunit</shortName>
    </recommendedName>
</protein>
<organism>
    <name type="scientific">Schizosaccharomyces pombe (strain 972 / ATCC 24843)</name>
    <name type="common">Fission yeast</name>
    <dbReference type="NCBI Taxonomy" id="284812"/>
    <lineage>
        <taxon>Eukaryota</taxon>
        <taxon>Fungi</taxon>
        <taxon>Dikarya</taxon>
        <taxon>Ascomycota</taxon>
        <taxon>Taphrinomycotina</taxon>
        <taxon>Schizosaccharomycetes</taxon>
        <taxon>Schizosaccharomycetales</taxon>
        <taxon>Schizosaccharomycetaceae</taxon>
        <taxon>Schizosaccharomyces</taxon>
    </lineage>
</organism>
<proteinExistence type="evidence at protein level"/>
<keyword id="KW-0539">Nucleus</keyword>
<keyword id="KW-0597">Phosphoprotein</keyword>
<keyword id="KW-1185">Reference proteome</keyword>
<keyword id="KW-0804">Transcription</keyword>
<comment type="function">
    <text evidence="1">TFIIA is a component of the transcription machinery of RNA polymerase II and plays an important role in transcriptional activation. TFIIA in a complex with tbp mediates transcriptional activity (By similarity).</text>
</comment>
<comment type="subunit">
    <text evidence="1">TFIIA is a heterodimer of the large subunit and the small subunit gamma.</text>
</comment>
<comment type="subcellular location">
    <subcellularLocation>
        <location evidence="1">Nucleus</location>
    </subcellularLocation>
</comment>
<comment type="similarity">
    <text evidence="5">Belongs to the TFIIA subunit 1 family.</text>
</comment>
<feature type="chain" id="PRO_0000364025" description="Transcription initiation factor IIA large subunit">
    <location>
        <begin position="1"/>
        <end position="369"/>
    </location>
</feature>
<feature type="region of interest" description="Disordered" evidence="3">
    <location>
        <begin position="113"/>
        <end position="248"/>
    </location>
</feature>
<feature type="region of interest" description="Disordered" evidence="3">
    <location>
        <begin position="282"/>
        <end position="319"/>
    </location>
</feature>
<feature type="compositionally biased region" description="Polar residues" evidence="3">
    <location>
        <begin position="113"/>
        <end position="210"/>
    </location>
</feature>
<feature type="compositionally biased region" description="Polar residues" evidence="3">
    <location>
        <begin position="218"/>
        <end position="233"/>
    </location>
</feature>
<feature type="compositionally biased region" description="Acidic residues" evidence="3">
    <location>
        <begin position="304"/>
        <end position="319"/>
    </location>
</feature>
<feature type="modified residue" description="Phosphoserine" evidence="4">
    <location>
        <position position="249"/>
    </location>
</feature>
<evidence type="ECO:0000250" key="1"/>
<evidence type="ECO:0000250" key="2">
    <source>
        <dbReference type="UniProtKB" id="P32773"/>
    </source>
</evidence>
<evidence type="ECO:0000256" key="3">
    <source>
        <dbReference type="SAM" id="MobiDB-lite"/>
    </source>
</evidence>
<evidence type="ECO:0000269" key="4">
    <source>
    </source>
</evidence>
<evidence type="ECO:0000305" key="5"/>
<evidence type="ECO:0000312" key="6">
    <source>
        <dbReference type="EMBL" id="CAB57938.1"/>
    </source>
</evidence>
<reference evidence="6" key="1">
    <citation type="journal article" date="2002" name="Nature">
        <title>The genome sequence of Schizosaccharomyces pombe.</title>
        <authorList>
            <person name="Wood V."/>
            <person name="Gwilliam R."/>
            <person name="Rajandream M.A."/>
            <person name="Lyne M.H."/>
            <person name="Lyne R."/>
            <person name="Stewart A."/>
            <person name="Sgouros J.G."/>
            <person name="Peat N."/>
            <person name="Hayles J."/>
            <person name="Baker S.G."/>
            <person name="Basham D."/>
            <person name="Bowman S."/>
            <person name="Brooks K."/>
            <person name="Brown D."/>
            <person name="Brown S."/>
            <person name="Chillingworth T."/>
            <person name="Churcher C.M."/>
            <person name="Collins M."/>
            <person name="Connor R."/>
            <person name="Cronin A."/>
            <person name="Davis P."/>
            <person name="Feltwell T."/>
            <person name="Fraser A."/>
            <person name="Gentles S."/>
            <person name="Goble A."/>
            <person name="Hamlin N."/>
            <person name="Harris D.E."/>
            <person name="Hidalgo J."/>
            <person name="Hodgson G."/>
            <person name="Holroyd S."/>
            <person name="Hornsby T."/>
            <person name="Howarth S."/>
            <person name="Huckle E.J."/>
            <person name="Hunt S."/>
            <person name="Jagels K."/>
            <person name="James K.D."/>
            <person name="Jones L."/>
            <person name="Jones M."/>
            <person name="Leather S."/>
            <person name="McDonald S."/>
            <person name="McLean J."/>
            <person name="Mooney P."/>
            <person name="Moule S."/>
            <person name="Mungall K.L."/>
            <person name="Murphy L.D."/>
            <person name="Niblett D."/>
            <person name="Odell C."/>
            <person name="Oliver K."/>
            <person name="O'Neil S."/>
            <person name="Pearson D."/>
            <person name="Quail M.A."/>
            <person name="Rabbinowitsch E."/>
            <person name="Rutherford K.M."/>
            <person name="Rutter S."/>
            <person name="Saunders D."/>
            <person name="Seeger K."/>
            <person name="Sharp S."/>
            <person name="Skelton J."/>
            <person name="Simmonds M.N."/>
            <person name="Squares R."/>
            <person name="Squares S."/>
            <person name="Stevens K."/>
            <person name="Taylor K."/>
            <person name="Taylor R.G."/>
            <person name="Tivey A."/>
            <person name="Walsh S.V."/>
            <person name="Warren T."/>
            <person name="Whitehead S."/>
            <person name="Woodward J.R."/>
            <person name="Volckaert G."/>
            <person name="Aert R."/>
            <person name="Robben J."/>
            <person name="Grymonprez B."/>
            <person name="Weltjens I."/>
            <person name="Vanstreels E."/>
            <person name="Rieger M."/>
            <person name="Schaefer M."/>
            <person name="Mueller-Auer S."/>
            <person name="Gabel C."/>
            <person name="Fuchs M."/>
            <person name="Duesterhoeft A."/>
            <person name="Fritzc C."/>
            <person name="Holzer E."/>
            <person name="Moestl D."/>
            <person name="Hilbert H."/>
            <person name="Borzym K."/>
            <person name="Langer I."/>
            <person name="Beck A."/>
            <person name="Lehrach H."/>
            <person name="Reinhardt R."/>
            <person name="Pohl T.M."/>
            <person name="Eger P."/>
            <person name="Zimmermann W."/>
            <person name="Wedler H."/>
            <person name="Wambutt R."/>
            <person name="Purnelle B."/>
            <person name="Goffeau A."/>
            <person name="Cadieu E."/>
            <person name="Dreano S."/>
            <person name="Gloux S."/>
            <person name="Lelaure V."/>
            <person name="Mottier S."/>
            <person name="Galibert F."/>
            <person name="Aves S.J."/>
            <person name="Xiang Z."/>
            <person name="Hunt C."/>
            <person name="Moore K."/>
            <person name="Hurst S.M."/>
            <person name="Lucas M."/>
            <person name="Rochet M."/>
            <person name="Gaillardin C."/>
            <person name="Tallada V.A."/>
            <person name="Garzon A."/>
            <person name="Thode G."/>
            <person name="Daga R.R."/>
            <person name="Cruzado L."/>
            <person name="Jimenez J."/>
            <person name="Sanchez M."/>
            <person name="del Rey F."/>
            <person name="Benito J."/>
            <person name="Dominguez A."/>
            <person name="Revuelta J.L."/>
            <person name="Moreno S."/>
            <person name="Armstrong J."/>
            <person name="Forsburg S.L."/>
            <person name="Cerutti L."/>
            <person name="Lowe T."/>
            <person name="McCombie W.R."/>
            <person name="Paulsen I."/>
            <person name="Potashkin J."/>
            <person name="Shpakovski G.V."/>
            <person name="Ussery D."/>
            <person name="Barrell B.G."/>
            <person name="Nurse P."/>
        </authorList>
    </citation>
    <scope>NUCLEOTIDE SEQUENCE [LARGE SCALE GENOMIC DNA]</scope>
    <source>
        <strain>972 / ATCC 24843</strain>
    </source>
</reference>
<reference evidence="5" key="2">
    <citation type="journal article" date="2006" name="Nat. Biotechnol.">
        <title>ORFeome cloning and global analysis of protein localization in the fission yeast Schizosaccharomyces pombe.</title>
        <authorList>
            <person name="Matsuyama A."/>
            <person name="Arai R."/>
            <person name="Yashiroda Y."/>
            <person name="Shirai A."/>
            <person name="Kamata A."/>
            <person name="Sekido S."/>
            <person name="Kobayashi Y."/>
            <person name="Hashimoto A."/>
            <person name="Hamamoto M."/>
            <person name="Hiraoka Y."/>
            <person name="Horinouchi S."/>
            <person name="Yoshida M."/>
        </authorList>
    </citation>
    <scope>SUBCELLULAR LOCATION [LARGE SCALE ANALYSIS]</scope>
</reference>
<reference evidence="5" key="3">
    <citation type="journal article" date="2008" name="J. Proteome Res.">
        <title>Phosphoproteome analysis of fission yeast.</title>
        <authorList>
            <person name="Wilson-Grady J.T."/>
            <person name="Villen J."/>
            <person name="Gygi S.P."/>
        </authorList>
    </citation>
    <scope>PHOSPHORYLATION [LARGE SCALE ANALYSIS] AT SER-249</scope>
    <scope>IDENTIFICATION BY MASS SPECTROMETRY</scope>
</reference>
<name>TOA1_SCHPO</name>
<dbReference type="EMBL" id="CU329671">
    <property type="protein sequence ID" value="CAB57938.1"/>
    <property type="molecule type" value="Genomic_DNA"/>
</dbReference>
<dbReference type="PIR" id="T40052">
    <property type="entry name" value="T40052"/>
</dbReference>
<dbReference type="RefSeq" id="NP_595670.1">
    <property type="nucleotide sequence ID" value="NM_001021565.2"/>
</dbReference>
<dbReference type="SMR" id="Q9USU9"/>
<dbReference type="BioGRID" id="277158">
    <property type="interactions" value="2"/>
</dbReference>
<dbReference type="FunCoup" id="Q9USU9">
    <property type="interactions" value="484"/>
</dbReference>
<dbReference type="STRING" id="284812.Q9USU9"/>
<dbReference type="iPTMnet" id="Q9USU9"/>
<dbReference type="PaxDb" id="4896-SPBC28F2.09.1"/>
<dbReference type="EnsemblFungi" id="SPBC28F2.09.1">
    <property type="protein sequence ID" value="SPBC28F2.09.1:pep"/>
    <property type="gene ID" value="SPBC28F2.09"/>
</dbReference>
<dbReference type="GeneID" id="2540632"/>
<dbReference type="KEGG" id="spo:2540632"/>
<dbReference type="PomBase" id="SPBC28F2.09">
    <property type="gene designation" value="toa1"/>
</dbReference>
<dbReference type="VEuPathDB" id="FungiDB:SPBC28F2.09"/>
<dbReference type="eggNOG" id="KOG2652">
    <property type="taxonomic scope" value="Eukaryota"/>
</dbReference>
<dbReference type="HOGENOM" id="CLU_030027_4_1_1"/>
<dbReference type="InParanoid" id="Q9USU9"/>
<dbReference type="OMA" id="EVCDASQ"/>
<dbReference type="PhylomeDB" id="Q9USU9"/>
<dbReference type="Reactome" id="R-SPO-674695">
    <property type="pathway name" value="RNA Polymerase II Pre-transcription Events"/>
</dbReference>
<dbReference type="Reactome" id="R-SPO-6807505">
    <property type="pathway name" value="RNA polymerase II transcribes snRNA genes"/>
</dbReference>
<dbReference type="Reactome" id="R-SPO-73776">
    <property type="pathway name" value="RNA Polymerase II Promoter Escape"/>
</dbReference>
<dbReference type="Reactome" id="R-SPO-73779">
    <property type="pathway name" value="RNA Polymerase II Transcription Pre-Initiation And Promoter Opening"/>
</dbReference>
<dbReference type="Reactome" id="R-SPO-75953">
    <property type="pathway name" value="RNA Polymerase II Transcription Initiation"/>
</dbReference>
<dbReference type="Reactome" id="R-SPO-76042">
    <property type="pathway name" value="RNA Polymerase II Transcription Initiation And Promoter Clearance"/>
</dbReference>
<dbReference type="Reactome" id="R-SPO-9018519">
    <property type="pathway name" value="Estrogen-dependent gene expression"/>
</dbReference>
<dbReference type="PRO" id="PR:Q9USU9"/>
<dbReference type="Proteomes" id="UP000002485">
    <property type="component" value="Chromosome II"/>
</dbReference>
<dbReference type="GO" id="GO:0005829">
    <property type="term" value="C:cytosol"/>
    <property type="evidence" value="ECO:0007005"/>
    <property type="project" value="PomBase"/>
</dbReference>
<dbReference type="GO" id="GO:0005634">
    <property type="term" value="C:nucleus"/>
    <property type="evidence" value="ECO:0007005"/>
    <property type="project" value="PomBase"/>
</dbReference>
<dbReference type="GO" id="GO:0005672">
    <property type="term" value="C:transcription factor TFIIA complex"/>
    <property type="evidence" value="ECO:0000318"/>
    <property type="project" value="GO_Central"/>
</dbReference>
<dbReference type="GO" id="GO:0016251">
    <property type="term" value="F:RNA polymerase II general transcription initiation factor activity"/>
    <property type="evidence" value="ECO:0000266"/>
    <property type="project" value="PomBase"/>
</dbReference>
<dbReference type="GO" id="GO:0006366">
    <property type="term" value="P:transcription by RNA polymerase II"/>
    <property type="evidence" value="ECO:0000318"/>
    <property type="project" value="GO_Central"/>
</dbReference>
<dbReference type="GO" id="GO:0006367">
    <property type="term" value="P:transcription initiation at RNA polymerase II promoter"/>
    <property type="evidence" value="ECO:0000266"/>
    <property type="project" value="PomBase"/>
</dbReference>
<dbReference type="CDD" id="cd07976">
    <property type="entry name" value="TFIIA_alpha_beta_like"/>
    <property type="match status" value="2"/>
</dbReference>
<dbReference type="FunFam" id="2.30.18.10:FF:000008">
    <property type="entry name" value="Transcription factor TFIIA complex large subunit"/>
    <property type="match status" value="1"/>
</dbReference>
<dbReference type="FunFam" id="1.10.287.100:FF:000001">
    <property type="entry name" value="Transcription initiation factor IIA subunit"/>
    <property type="match status" value="1"/>
</dbReference>
<dbReference type="Gene3D" id="1.10.287.100">
    <property type="match status" value="1"/>
</dbReference>
<dbReference type="Gene3D" id="2.30.18.10">
    <property type="entry name" value="Transcription factor IIA (TFIIA), beta-barrel domain"/>
    <property type="match status" value="1"/>
</dbReference>
<dbReference type="InterPro" id="IPR004855">
    <property type="entry name" value="TFIIA_asu/bsu"/>
</dbReference>
<dbReference type="InterPro" id="IPR009088">
    <property type="entry name" value="TFIIA_b-brl"/>
</dbReference>
<dbReference type="PANTHER" id="PTHR12694">
    <property type="entry name" value="TRANSCRIPTION INITIATION FACTOR IIA SUBUNIT 1"/>
    <property type="match status" value="1"/>
</dbReference>
<dbReference type="PANTHER" id="PTHR12694:SF8">
    <property type="entry name" value="TRANSCRIPTION INITIATION FACTOR IIA SUBUNIT 1"/>
    <property type="match status" value="1"/>
</dbReference>
<dbReference type="Pfam" id="PF03153">
    <property type="entry name" value="TFIIA"/>
    <property type="match status" value="2"/>
</dbReference>
<dbReference type="SMART" id="SM01371">
    <property type="entry name" value="TFIIA"/>
    <property type="match status" value="1"/>
</dbReference>
<dbReference type="SUPFAM" id="SSF47396">
    <property type="entry name" value="Transcription factor IIA (TFIIA), alpha-helical domain"/>
    <property type="match status" value="1"/>
</dbReference>
<dbReference type="SUPFAM" id="SSF50784">
    <property type="entry name" value="Transcription factor IIA (TFIIA), beta-barrel domain"/>
    <property type="match status" value="1"/>
</dbReference>
<gene>
    <name evidence="2" type="primary">toa1</name>
    <name type="ORF">SPBC28F2.09</name>
</gene>